<keyword id="KW-0002">3D-structure</keyword>
<keyword id="KW-0963">Cytoplasm</keyword>
<keyword id="KW-0378">Hydrolase</keyword>
<keyword id="KW-0460">Magnesium</keyword>
<keyword id="KW-0479">Metal-binding</keyword>
<proteinExistence type="evidence at protein level"/>
<protein>
    <recommendedName>
        <fullName evidence="1">Inorganic pyrophosphatase</fullName>
        <ecNumber evidence="1">3.6.1.1</ecNumber>
    </recommendedName>
    <alternativeName>
        <fullName evidence="1">Pyrophosphate phospho-hydrolase</fullName>
        <shortName evidence="1">PPase</shortName>
    </alternativeName>
</protein>
<organism>
    <name type="scientific">Pyrococcus horikoshii (strain ATCC 700860 / DSM 12428 / JCM 9974 / NBRC 100139 / OT-3)</name>
    <dbReference type="NCBI Taxonomy" id="70601"/>
    <lineage>
        <taxon>Archaea</taxon>
        <taxon>Methanobacteriati</taxon>
        <taxon>Methanobacteriota</taxon>
        <taxon>Thermococci</taxon>
        <taxon>Thermococcales</taxon>
        <taxon>Thermococcaceae</taxon>
        <taxon>Pyrococcus</taxon>
    </lineage>
</organism>
<reference key="1">
    <citation type="journal article" date="1998" name="DNA Res.">
        <title>Complete sequence and gene organization of the genome of a hyper-thermophilic archaebacterium, Pyrococcus horikoshii OT3.</title>
        <authorList>
            <person name="Kawarabayasi Y."/>
            <person name="Sawada M."/>
            <person name="Horikawa H."/>
            <person name="Haikawa Y."/>
            <person name="Hino Y."/>
            <person name="Yamamoto S."/>
            <person name="Sekine M."/>
            <person name="Baba S."/>
            <person name="Kosugi H."/>
            <person name="Hosoyama A."/>
            <person name="Nagai Y."/>
            <person name="Sakai M."/>
            <person name="Ogura K."/>
            <person name="Otsuka R."/>
            <person name="Nakazawa H."/>
            <person name="Takamiya M."/>
            <person name="Ohfuku Y."/>
            <person name="Funahashi T."/>
            <person name="Tanaka T."/>
            <person name="Kudoh Y."/>
            <person name="Yamazaki J."/>
            <person name="Kushida N."/>
            <person name="Oguchi A."/>
            <person name="Aoki K."/>
            <person name="Yoshizawa T."/>
            <person name="Nakamura Y."/>
            <person name="Robb F.T."/>
            <person name="Horikoshi K."/>
            <person name="Masuchi Y."/>
            <person name="Shizuya H."/>
            <person name="Kikuchi H."/>
        </authorList>
    </citation>
    <scope>NUCLEOTIDE SEQUENCE [LARGE SCALE GENOMIC DNA]</scope>
    <source>
        <strain>ATCC 700860 / DSM 12428 / JCM 9974 / NBRC 100139 / OT-3</strain>
    </source>
</reference>
<sequence length="178" mass="20834">MNPFHDLEPGPNVPEVVYALIEIPKGSRNKYELDKETGLLKLDRVLYTPFHYPVDYGIIPRTWYEDGDPFDIMVIMREPTYPLTIIEARPIGLFKMIDSGDKDYKVLAVPVEDPYFKDWKDISDVPKAFLDEIAHFFKRYKELEGKEIIVEGWEGAEAAKREILRAIEMYKEKFGKKE</sequence>
<gene>
    <name evidence="1" type="primary">ppa</name>
    <name type="ordered locus">PH1907</name>
    <name type="ORF">PHBT007</name>
</gene>
<comment type="function">
    <text evidence="1">Catalyzes the hydrolysis of inorganic pyrophosphate (PPi) forming two phosphate ions.</text>
</comment>
<comment type="catalytic activity">
    <reaction evidence="1">
        <text>diphosphate + H2O = 2 phosphate + H(+)</text>
        <dbReference type="Rhea" id="RHEA:24576"/>
        <dbReference type="ChEBI" id="CHEBI:15377"/>
        <dbReference type="ChEBI" id="CHEBI:15378"/>
        <dbReference type="ChEBI" id="CHEBI:33019"/>
        <dbReference type="ChEBI" id="CHEBI:43474"/>
        <dbReference type="EC" id="3.6.1.1"/>
    </reaction>
</comment>
<comment type="cofactor">
    <cofactor evidence="1">
        <name>Mg(2+)</name>
        <dbReference type="ChEBI" id="CHEBI:18420"/>
    </cofactor>
</comment>
<comment type="subunit">
    <text evidence="1">Homohexamer.</text>
</comment>
<comment type="subcellular location">
    <subcellularLocation>
        <location evidence="1">Cytoplasm</location>
    </subcellularLocation>
</comment>
<comment type="similarity">
    <text evidence="1">Belongs to the PPase family.</text>
</comment>
<name>IPYR_PYRHO</name>
<evidence type="ECO:0000255" key="1">
    <source>
        <dbReference type="HAMAP-Rule" id="MF_00209"/>
    </source>
</evidence>
<evidence type="ECO:0007829" key="2">
    <source>
        <dbReference type="PDB" id="1UDE"/>
    </source>
</evidence>
<feature type="chain" id="PRO_0000137557" description="Inorganic pyrophosphatase">
    <location>
        <begin position="1"/>
        <end position="178"/>
    </location>
</feature>
<feature type="binding site" evidence="1">
    <location>
        <position position="30"/>
    </location>
    <ligand>
        <name>substrate</name>
    </ligand>
</feature>
<feature type="binding site" evidence="1">
    <location>
        <position position="44"/>
    </location>
    <ligand>
        <name>substrate</name>
    </ligand>
</feature>
<feature type="binding site" evidence="1">
    <location>
        <position position="56"/>
    </location>
    <ligand>
        <name>substrate</name>
    </ligand>
</feature>
<feature type="binding site" evidence="1">
    <location>
        <position position="66"/>
    </location>
    <ligand>
        <name>Mg(2+)</name>
        <dbReference type="ChEBI" id="CHEBI:18420"/>
        <label>1</label>
    </ligand>
</feature>
<feature type="binding site" evidence="1">
    <location>
        <position position="71"/>
    </location>
    <ligand>
        <name>Mg(2+)</name>
        <dbReference type="ChEBI" id="CHEBI:18420"/>
        <label>1</label>
    </ligand>
</feature>
<feature type="binding site" evidence="1">
    <location>
        <position position="71"/>
    </location>
    <ligand>
        <name>Mg(2+)</name>
        <dbReference type="ChEBI" id="CHEBI:18420"/>
        <label>2</label>
    </ligand>
</feature>
<feature type="binding site" evidence="1">
    <location>
        <position position="103"/>
    </location>
    <ligand>
        <name>Mg(2+)</name>
        <dbReference type="ChEBI" id="CHEBI:18420"/>
        <label>1</label>
    </ligand>
</feature>
<feature type="binding site" evidence="1">
    <location>
        <position position="140"/>
    </location>
    <ligand>
        <name>substrate</name>
    </ligand>
</feature>
<feature type="turn" evidence="2">
    <location>
        <begin position="11"/>
        <end position="15"/>
    </location>
</feature>
<feature type="strand" evidence="2">
    <location>
        <begin position="17"/>
        <end position="23"/>
    </location>
</feature>
<feature type="strand" evidence="2">
    <location>
        <begin position="29"/>
        <end position="33"/>
    </location>
</feature>
<feature type="strand" evidence="2">
    <location>
        <begin position="35"/>
        <end position="37"/>
    </location>
</feature>
<feature type="strand" evidence="2">
    <location>
        <begin position="39"/>
        <end position="45"/>
    </location>
</feature>
<feature type="strand" evidence="2">
    <location>
        <begin position="47"/>
        <end position="49"/>
    </location>
</feature>
<feature type="strand" evidence="2">
    <location>
        <begin position="53"/>
        <end position="58"/>
    </location>
</feature>
<feature type="turn" evidence="2">
    <location>
        <begin position="65"/>
        <end position="67"/>
    </location>
</feature>
<feature type="strand" evidence="2">
    <location>
        <begin position="71"/>
        <end position="74"/>
    </location>
</feature>
<feature type="strand" evidence="2">
    <location>
        <begin position="85"/>
        <end position="98"/>
    </location>
</feature>
<feature type="strand" evidence="2">
    <location>
        <begin position="105"/>
        <end position="110"/>
    </location>
</feature>
<feature type="helix" evidence="2">
    <location>
        <begin position="114"/>
        <end position="116"/>
    </location>
</feature>
<feature type="helix" evidence="2">
    <location>
        <begin position="122"/>
        <end position="124"/>
    </location>
</feature>
<feature type="helix" evidence="2">
    <location>
        <begin position="127"/>
        <end position="139"/>
    </location>
</feature>
<feature type="helix" evidence="2">
    <location>
        <begin position="142"/>
        <end position="144"/>
    </location>
</feature>
<feature type="strand" evidence="2">
    <location>
        <begin position="148"/>
        <end position="155"/>
    </location>
</feature>
<feature type="helix" evidence="2">
    <location>
        <begin position="156"/>
        <end position="170"/>
    </location>
</feature>
<dbReference type="EC" id="3.6.1.1" evidence="1"/>
<dbReference type="EMBL" id="BA000001">
    <property type="protein sequence ID" value="BAA31032.1"/>
    <property type="molecule type" value="Genomic_DNA"/>
</dbReference>
<dbReference type="PIR" id="A71205">
    <property type="entry name" value="A71205"/>
</dbReference>
<dbReference type="RefSeq" id="WP_010885971.1">
    <property type="nucleotide sequence ID" value="NC_000961.1"/>
</dbReference>
<dbReference type="PDB" id="1UDE">
    <property type="method" value="X-ray"/>
    <property type="resolution" value="2.66 A"/>
    <property type="chains" value="A/B/C=1-178"/>
</dbReference>
<dbReference type="PDBsum" id="1UDE"/>
<dbReference type="SMR" id="O59570"/>
<dbReference type="STRING" id="70601.gene:9378917"/>
<dbReference type="EnsemblBacteria" id="BAA31032">
    <property type="protein sequence ID" value="BAA31032"/>
    <property type="gene ID" value="BAA31032"/>
</dbReference>
<dbReference type="GeneID" id="1442753"/>
<dbReference type="KEGG" id="pho:PH1907"/>
<dbReference type="eggNOG" id="arCOG01711">
    <property type="taxonomic scope" value="Archaea"/>
</dbReference>
<dbReference type="OrthoDB" id="134160at2157"/>
<dbReference type="BRENDA" id="3.6.1.1">
    <property type="organism ID" value="5244"/>
</dbReference>
<dbReference type="EvolutionaryTrace" id="O59570"/>
<dbReference type="Proteomes" id="UP000000752">
    <property type="component" value="Chromosome"/>
</dbReference>
<dbReference type="GO" id="GO:0005737">
    <property type="term" value="C:cytoplasm"/>
    <property type="evidence" value="ECO:0007669"/>
    <property type="project" value="UniProtKB-SubCell"/>
</dbReference>
<dbReference type="GO" id="GO:0004427">
    <property type="term" value="F:inorganic diphosphate phosphatase activity"/>
    <property type="evidence" value="ECO:0007669"/>
    <property type="project" value="UniProtKB-UniRule"/>
</dbReference>
<dbReference type="GO" id="GO:0000287">
    <property type="term" value="F:magnesium ion binding"/>
    <property type="evidence" value="ECO:0007669"/>
    <property type="project" value="UniProtKB-UniRule"/>
</dbReference>
<dbReference type="GO" id="GO:0006796">
    <property type="term" value="P:phosphate-containing compound metabolic process"/>
    <property type="evidence" value="ECO:0007669"/>
    <property type="project" value="InterPro"/>
</dbReference>
<dbReference type="CDD" id="cd00412">
    <property type="entry name" value="pyrophosphatase"/>
    <property type="match status" value="1"/>
</dbReference>
<dbReference type="FunFam" id="3.90.80.10:FF:000003">
    <property type="entry name" value="Inorganic pyrophosphatase"/>
    <property type="match status" value="1"/>
</dbReference>
<dbReference type="Gene3D" id="3.90.80.10">
    <property type="entry name" value="Inorganic pyrophosphatase"/>
    <property type="match status" value="1"/>
</dbReference>
<dbReference type="HAMAP" id="MF_00209">
    <property type="entry name" value="Inorganic_PPase"/>
    <property type="match status" value="1"/>
</dbReference>
<dbReference type="InterPro" id="IPR008162">
    <property type="entry name" value="Pyrophosphatase"/>
</dbReference>
<dbReference type="InterPro" id="IPR036649">
    <property type="entry name" value="Pyrophosphatase_sf"/>
</dbReference>
<dbReference type="PANTHER" id="PTHR10286">
    <property type="entry name" value="INORGANIC PYROPHOSPHATASE"/>
    <property type="match status" value="1"/>
</dbReference>
<dbReference type="Pfam" id="PF00719">
    <property type="entry name" value="Pyrophosphatase"/>
    <property type="match status" value="1"/>
</dbReference>
<dbReference type="SUPFAM" id="SSF50324">
    <property type="entry name" value="Inorganic pyrophosphatase"/>
    <property type="match status" value="1"/>
</dbReference>
<dbReference type="PROSITE" id="PS00387">
    <property type="entry name" value="PPASE"/>
    <property type="match status" value="1"/>
</dbReference>
<accession>O59570</accession>